<proteinExistence type="evidence at protein level"/>
<reference key="1">
    <citation type="journal article" date="2007" name="Genome Res.">
        <title>Reductive evolution and niche adaptation inferred from the genome of Mycobacterium ulcerans, the causative agent of Buruli ulcer.</title>
        <authorList>
            <person name="Stinear T.P."/>
            <person name="Seemann T."/>
            <person name="Pidot S."/>
            <person name="Frigui W."/>
            <person name="Reysset G."/>
            <person name="Garnier T."/>
            <person name="Meurice G."/>
            <person name="Simon D."/>
            <person name="Bouchier C."/>
            <person name="Ma L."/>
            <person name="Tichit M."/>
            <person name="Porter J.L."/>
            <person name="Ryan J."/>
            <person name="Johnson P.D.R."/>
            <person name="Davies J.K."/>
            <person name="Jenkin G.A."/>
            <person name="Small P.L.C."/>
            <person name="Jones L.M."/>
            <person name="Tekaia F."/>
            <person name="Laval F."/>
            <person name="Daffe M."/>
            <person name="Parkhill J."/>
            <person name="Cole S.T."/>
        </authorList>
    </citation>
    <scope>NUCLEOTIDE SEQUENCE [LARGE SCALE GENOMIC DNA]</scope>
    <source>
        <strain>Agy99</strain>
    </source>
</reference>
<reference key="2">
    <citation type="journal article" date="2018" name="Biochemistry">
        <title>Mycofactocin Biosynthesis Proceeds through 3-Amino-5-[(p-hydroxyphenyl)methyl]-4,4-dimethyl-2-pyrrolidinone (AHDP); Direct Observation of MftE Specificity toward MftA.</title>
        <authorList>
            <person name="Ayikpoe R."/>
            <person name="Salazar J."/>
            <person name="Majestic B."/>
            <person name="Latham J.A."/>
        </authorList>
    </citation>
    <scope>FUNCTION</scope>
    <scope>CATALYTIC ACTIVITY</scope>
    <scope>COFACTOR</scope>
    <scope>SUBUNIT</scope>
    <source>
        <strain>Agy99</strain>
    </source>
</reference>
<name>MFTE_MYCUA</name>
<keyword id="KW-0378">Hydrolase</keyword>
<keyword id="KW-0408">Iron</keyword>
<keyword id="KW-0464">Manganese</keyword>
<keyword id="KW-0479">Metal-binding</keyword>
<keyword id="KW-0645">Protease</keyword>
<keyword id="KW-0862">Zinc</keyword>
<feature type="chain" id="PRO_0000452052" description="Mycofactocin precursor peptide peptidase">
    <location>
        <begin position="1"/>
        <end position="250"/>
    </location>
</feature>
<feature type="binding site" evidence="1">
    <location>
        <position position="38"/>
    </location>
    <ligand>
        <name>a divalent metal cation</name>
        <dbReference type="ChEBI" id="CHEBI:60240"/>
        <label>1</label>
    </ligand>
</feature>
<feature type="binding site" evidence="1">
    <location>
        <position position="40"/>
    </location>
    <ligand>
        <name>a divalent metal cation</name>
        <dbReference type="ChEBI" id="CHEBI:60240"/>
        <label>2</label>
    </ligand>
</feature>
<feature type="binding site" evidence="1">
    <location>
        <position position="49"/>
    </location>
    <ligand>
        <name>a divalent metal cation</name>
        <dbReference type="ChEBI" id="CHEBI:60240"/>
        <label>1</label>
    </ligand>
</feature>
<feature type="binding site" evidence="1">
    <location>
        <position position="49"/>
    </location>
    <ligand>
        <name>a divalent metal cation</name>
        <dbReference type="ChEBI" id="CHEBI:60240"/>
        <label>2</label>
    </ligand>
</feature>
<feature type="binding site" evidence="1">
    <location>
        <position position="127"/>
    </location>
    <ligand>
        <name>a divalent metal cation</name>
        <dbReference type="ChEBI" id="CHEBI:60240"/>
        <label>1</label>
    </ligand>
</feature>
<feature type="binding site" evidence="1">
    <location>
        <position position="166"/>
    </location>
    <ligand>
        <name>a divalent metal cation</name>
        <dbReference type="ChEBI" id="CHEBI:60240"/>
        <label>2</label>
    </ligand>
</feature>
<dbReference type="EC" id="3.4.14.14" evidence="2"/>
<dbReference type="EMBL" id="CP000325">
    <property type="protein sequence ID" value="ABL03420.1"/>
    <property type="molecule type" value="Genomic_DNA"/>
</dbReference>
<dbReference type="RefSeq" id="WP_011739045.1">
    <property type="nucleotide sequence ID" value="NC_008611.1"/>
</dbReference>
<dbReference type="SMR" id="A0PM51"/>
<dbReference type="KEGG" id="mul:MUL_0775"/>
<dbReference type="eggNOG" id="COG1402">
    <property type="taxonomic scope" value="Bacteria"/>
</dbReference>
<dbReference type="HOGENOM" id="CLU_055029_4_0_11"/>
<dbReference type="BioCyc" id="MetaCyc:MONOMER-21115"/>
<dbReference type="Proteomes" id="UP000000765">
    <property type="component" value="Chromosome"/>
</dbReference>
<dbReference type="GO" id="GO:0016811">
    <property type="term" value="F:hydrolase activity, acting on carbon-nitrogen (but not peptide) bonds, in linear amides"/>
    <property type="evidence" value="ECO:0007669"/>
    <property type="project" value="TreeGrafter"/>
</dbReference>
<dbReference type="GO" id="GO:0046872">
    <property type="term" value="F:metal ion binding"/>
    <property type="evidence" value="ECO:0007669"/>
    <property type="project" value="UniProtKB-KW"/>
</dbReference>
<dbReference type="GO" id="GO:0008233">
    <property type="term" value="F:peptidase activity"/>
    <property type="evidence" value="ECO:0007669"/>
    <property type="project" value="UniProtKB-KW"/>
</dbReference>
<dbReference type="GO" id="GO:0006508">
    <property type="term" value="P:proteolysis"/>
    <property type="evidence" value="ECO:0007669"/>
    <property type="project" value="UniProtKB-KW"/>
</dbReference>
<dbReference type="GO" id="GO:0009231">
    <property type="term" value="P:riboflavin biosynthetic process"/>
    <property type="evidence" value="ECO:0007669"/>
    <property type="project" value="TreeGrafter"/>
</dbReference>
<dbReference type="Gene3D" id="3.40.50.10310">
    <property type="entry name" value="Creatininase"/>
    <property type="match status" value="1"/>
</dbReference>
<dbReference type="InterPro" id="IPR024087">
    <property type="entry name" value="Creatininase-like_sf"/>
</dbReference>
<dbReference type="InterPro" id="IPR003785">
    <property type="entry name" value="Creatininase/forma_Hydrolase"/>
</dbReference>
<dbReference type="InterPro" id="IPR023871">
    <property type="entry name" value="MftE"/>
</dbReference>
<dbReference type="NCBIfam" id="TIGR03964">
    <property type="entry name" value="mycofact_creat"/>
    <property type="match status" value="1"/>
</dbReference>
<dbReference type="PANTHER" id="PTHR35005:SF1">
    <property type="entry name" value="2-AMINO-5-FORMYLAMINO-6-RIBOSYLAMINOPYRIMIDIN-4(3H)-ONE 5'-MONOPHOSPHATE DEFORMYLASE"/>
    <property type="match status" value="1"/>
</dbReference>
<dbReference type="PANTHER" id="PTHR35005">
    <property type="entry name" value="3-DEHYDRO-SCYLLO-INOSOSE HYDROLASE"/>
    <property type="match status" value="1"/>
</dbReference>
<dbReference type="Pfam" id="PF02633">
    <property type="entry name" value="Creatininase"/>
    <property type="match status" value="1"/>
</dbReference>
<dbReference type="SUPFAM" id="SSF102215">
    <property type="entry name" value="Creatininase"/>
    <property type="match status" value="1"/>
</dbReference>
<evidence type="ECO:0000250" key="1">
    <source>
        <dbReference type="UniProtKB" id="P83772"/>
    </source>
</evidence>
<evidence type="ECO:0000269" key="2">
    <source>
    </source>
</evidence>
<evidence type="ECO:0000303" key="3">
    <source>
    </source>
</evidence>
<evidence type="ECO:0000305" key="4"/>
<evidence type="ECO:0000305" key="5">
    <source>
    </source>
</evidence>
<evidence type="ECO:0000312" key="6">
    <source>
        <dbReference type="EMBL" id="ABL03420.1"/>
    </source>
</evidence>
<protein>
    <recommendedName>
        <fullName evidence="5">Mycofactocin precursor peptide peptidase</fullName>
        <ecNumber evidence="2">3.4.14.14</ecNumber>
    </recommendedName>
</protein>
<gene>
    <name evidence="3" type="primary">mftE</name>
    <name evidence="6" type="ordered locus">MUL_0775</name>
</gene>
<accession>A0PM51</accession>
<organism>
    <name type="scientific">Mycobacterium ulcerans (strain Agy99)</name>
    <dbReference type="NCBI Taxonomy" id="362242"/>
    <lineage>
        <taxon>Bacteria</taxon>
        <taxon>Bacillati</taxon>
        <taxon>Actinomycetota</taxon>
        <taxon>Actinomycetes</taxon>
        <taxon>Mycobacteriales</taxon>
        <taxon>Mycobacteriaceae</taxon>
        <taxon>Mycobacterium</taxon>
        <taxon>Mycobacterium ulcerans group</taxon>
    </lineage>
</organism>
<comment type="function">
    <text evidence="2">Peptidase involved in the biosynthesis of the enzyme cofactor mycofactocin (MFT). Catalyzes cleavage of the MftC-modified MftA peptide to liberate its final two residues, which consist of a cross-linked valine-decarboxylated tyrosine dipeptide (named 3-amino-5-[(4-hydroxyphenyl)methyl]-4,4-dimethyl-2-pyrrolidin-2-one or ADHP).</text>
</comment>
<comment type="catalytic activity">
    <reaction evidence="2">
        <text>[mycofactocin precursor peptide]-C-terminal glycyl-N-{5-[(4-hydroxyphenyl)methyl]-4,4-dimethyl-2-oxopyrrolidin-3-yl}acetamide + H2O = [mycofactocin precursor peptide]-C-terminal glycine + 3-amino-5-[(4-hydroxyphenyl)methyl]-4,4-dimethyl-2-pyrrolidin-2-one</text>
        <dbReference type="Rhea" id="RHEA:65504"/>
        <dbReference type="Rhea" id="RHEA-COMP:16818"/>
        <dbReference type="Rhea" id="RHEA-COMP:16819"/>
        <dbReference type="ChEBI" id="CHEBI:15377"/>
        <dbReference type="ChEBI" id="CHEBI:83148"/>
        <dbReference type="ChEBI" id="CHEBI:150863"/>
        <dbReference type="ChEBI" id="CHEBI:156518"/>
        <dbReference type="EC" id="3.4.14.14"/>
    </reaction>
</comment>
<comment type="cofactor">
    <cofactor evidence="2">
        <name>Fe(2+)</name>
        <dbReference type="ChEBI" id="CHEBI:29033"/>
    </cofactor>
    <text evidence="2">MftE appears to bind one Fe(2+) and one Zn(2+) ion per subunit. Fe(2+) seems to be catalytically active while Zn(2+) could play an auxiliary role.</text>
</comment>
<comment type="cofactor">
    <cofactor evidence="2">
        <name>Zn(2+)</name>
        <dbReference type="ChEBI" id="CHEBI:29105"/>
    </cofactor>
</comment>
<comment type="subunit">
    <text evidence="2">Homooctamer.</text>
</comment>
<comment type="similarity">
    <text evidence="4">Belongs to the creatininase superfamily.</text>
</comment>
<sequence length="250" mass="26103">MNSSYHRRVPVLGELGTSTSSQLPSTWPSILIPLGSTEQHGPHLPLDTDTRIATAVGRAVATRMHGRLTQCQPGWLLAPPIAYGASGEHQSFAGTISIGAEALRVLLLEYGRSAACWADRLVFVNGHGGNVEALRGAVRQLRAEGRDAGWSACGSAGGDAHAGHTETSVLLHISPEVVLTDRLSAGNAAPLAELLPSLRRGGVAAVSPIGVLGDPTTATAVEGRRIFAEMVDDCVSRIARWTPGPDGMLT</sequence>